<name>Y968_STAEQ</name>
<organism>
    <name type="scientific">Staphylococcus epidermidis (strain ATCC 35984 / DSM 28319 / BCRC 17069 / CCUG 31568 / BM 3577 / RP62A)</name>
    <dbReference type="NCBI Taxonomy" id="176279"/>
    <lineage>
        <taxon>Bacteria</taxon>
        <taxon>Bacillati</taxon>
        <taxon>Bacillota</taxon>
        <taxon>Bacilli</taxon>
        <taxon>Bacillales</taxon>
        <taxon>Staphylococcaceae</taxon>
        <taxon>Staphylococcus</taxon>
    </lineage>
</organism>
<accession>Q5HPE4</accession>
<dbReference type="EC" id="3.-.-.-"/>
<dbReference type="EMBL" id="CP000029">
    <property type="protein sequence ID" value="AAW54300.1"/>
    <property type="molecule type" value="Genomic_DNA"/>
</dbReference>
<dbReference type="RefSeq" id="WP_002476112.1">
    <property type="nucleotide sequence ID" value="NC_002976.3"/>
</dbReference>
<dbReference type="SMR" id="Q5HPE4"/>
<dbReference type="STRING" id="176279.SERP0968"/>
<dbReference type="KEGG" id="ser:SERP0968"/>
<dbReference type="eggNOG" id="COG1473">
    <property type="taxonomic scope" value="Bacteria"/>
</dbReference>
<dbReference type="HOGENOM" id="CLU_023257_1_0_9"/>
<dbReference type="Proteomes" id="UP000000531">
    <property type="component" value="Chromosome"/>
</dbReference>
<dbReference type="GO" id="GO:0016787">
    <property type="term" value="F:hydrolase activity"/>
    <property type="evidence" value="ECO:0007669"/>
    <property type="project" value="UniProtKB-KW"/>
</dbReference>
<dbReference type="Gene3D" id="3.30.70.360">
    <property type="match status" value="1"/>
</dbReference>
<dbReference type="Gene3D" id="3.40.630.10">
    <property type="entry name" value="Zn peptidases"/>
    <property type="match status" value="1"/>
</dbReference>
<dbReference type="InterPro" id="IPR017439">
    <property type="entry name" value="Amidohydrolase"/>
</dbReference>
<dbReference type="InterPro" id="IPR036264">
    <property type="entry name" value="Bact_exopeptidase_dim_dom"/>
</dbReference>
<dbReference type="InterPro" id="IPR002933">
    <property type="entry name" value="Peptidase_M20"/>
</dbReference>
<dbReference type="InterPro" id="IPR011650">
    <property type="entry name" value="Peptidase_M20_dimer"/>
</dbReference>
<dbReference type="NCBIfam" id="TIGR01891">
    <property type="entry name" value="amidohydrolases"/>
    <property type="match status" value="1"/>
</dbReference>
<dbReference type="PANTHER" id="PTHR11014:SF63">
    <property type="entry name" value="METALLOPEPTIDASE, PUTATIVE (AFU_ORTHOLOGUE AFUA_6G09600)-RELATED"/>
    <property type="match status" value="1"/>
</dbReference>
<dbReference type="PANTHER" id="PTHR11014">
    <property type="entry name" value="PEPTIDASE M20 FAMILY MEMBER"/>
    <property type="match status" value="1"/>
</dbReference>
<dbReference type="Pfam" id="PF07687">
    <property type="entry name" value="M20_dimer"/>
    <property type="match status" value="1"/>
</dbReference>
<dbReference type="Pfam" id="PF01546">
    <property type="entry name" value="Peptidase_M20"/>
    <property type="match status" value="1"/>
</dbReference>
<dbReference type="PIRSF" id="PIRSF005962">
    <property type="entry name" value="Pept_M20D_amidohydro"/>
    <property type="match status" value="1"/>
</dbReference>
<dbReference type="SUPFAM" id="SSF55031">
    <property type="entry name" value="Bacterial exopeptidase dimerisation domain"/>
    <property type="match status" value="1"/>
</dbReference>
<dbReference type="SUPFAM" id="SSF53187">
    <property type="entry name" value="Zn-dependent exopeptidases"/>
    <property type="match status" value="1"/>
</dbReference>
<comment type="similarity">
    <text evidence="1">Belongs to the peptidase M20 family.</text>
</comment>
<gene>
    <name type="ordered locus">SERP0968</name>
</gene>
<keyword id="KW-0378">Hydrolase</keyword>
<keyword id="KW-1185">Reference proteome</keyword>
<sequence>MNELEFVTLHRRHLHQYPELSLHEFETTSYITSFLEDLGVPYDRPLKTGVIAYLEGNSHHTIAFRADIDALPIYEENDIDFKSKNDHVMHACGHDGHTTALMLFVKRCKALYDKSELPHNVVFIFQPAEETGGGANRLIKAGAFDKYPIEAVFGFHVNPFEKEGKIVIRDEEITASATEYRFFLKGLSSHVADKEQGHSCGEGLQHVLSQIGQIQQFHLNGLKRNIIHMGHFEAGEAINTVPSHGYLEGTIRTYDTEDLAIVKHQMHKIAESVQLLFNVECEVKFEEGYPPTMNHPQLRQAVENAIEGANLEVVEKKLPFLFGEDFSFYGQQLAPSYFVFVGTQNKEKGFVTGLHTAHLNFDEKILIDVVNYYEHLLRNYKEV</sequence>
<proteinExistence type="inferred from homology"/>
<feature type="chain" id="PRO_0000298628" description="Uncharacterized hydrolase SERP0968">
    <location>
        <begin position="1"/>
        <end position="383"/>
    </location>
</feature>
<evidence type="ECO:0000305" key="1"/>
<reference key="1">
    <citation type="journal article" date="2005" name="J. Bacteriol.">
        <title>Insights on evolution of virulence and resistance from the complete genome analysis of an early methicillin-resistant Staphylococcus aureus strain and a biofilm-producing methicillin-resistant Staphylococcus epidermidis strain.</title>
        <authorList>
            <person name="Gill S.R."/>
            <person name="Fouts D.E."/>
            <person name="Archer G.L."/>
            <person name="Mongodin E.F."/>
            <person name="DeBoy R.T."/>
            <person name="Ravel J."/>
            <person name="Paulsen I.T."/>
            <person name="Kolonay J.F."/>
            <person name="Brinkac L.M."/>
            <person name="Beanan M.J."/>
            <person name="Dodson R.J."/>
            <person name="Daugherty S.C."/>
            <person name="Madupu R."/>
            <person name="Angiuoli S.V."/>
            <person name="Durkin A.S."/>
            <person name="Haft D.H."/>
            <person name="Vamathevan J.J."/>
            <person name="Khouri H."/>
            <person name="Utterback T.R."/>
            <person name="Lee C."/>
            <person name="Dimitrov G."/>
            <person name="Jiang L."/>
            <person name="Qin H."/>
            <person name="Weidman J."/>
            <person name="Tran K."/>
            <person name="Kang K.H."/>
            <person name="Hance I.R."/>
            <person name="Nelson K.E."/>
            <person name="Fraser C.M."/>
        </authorList>
    </citation>
    <scope>NUCLEOTIDE SEQUENCE [LARGE SCALE GENOMIC DNA]</scope>
    <source>
        <strain>ATCC 35984 / DSM 28319 / BCRC 17069 / CCUG 31568 / BM 3577 / RP62A</strain>
    </source>
</reference>
<protein>
    <recommendedName>
        <fullName>Uncharacterized hydrolase SERP0968</fullName>
        <ecNumber>3.-.-.-</ecNumber>
    </recommendedName>
</protein>